<feature type="chain" id="PRO_1000122133" description="Integration host factor subunit alpha">
    <location>
        <begin position="1"/>
        <end position="110"/>
    </location>
</feature>
<comment type="function">
    <text evidence="1">This protein is one of the two subunits of integration host factor, a specific DNA-binding protein that functions in genetic recombination as well as in transcriptional and translational control.</text>
</comment>
<comment type="subunit">
    <text evidence="1">Heterodimer of an alpha and a beta chain.</text>
</comment>
<comment type="similarity">
    <text evidence="1">Belongs to the bacterial histone-like protein family.</text>
</comment>
<organism>
    <name type="scientific">Delftia acidovorans (strain DSM 14801 / SPH-1)</name>
    <dbReference type="NCBI Taxonomy" id="398578"/>
    <lineage>
        <taxon>Bacteria</taxon>
        <taxon>Pseudomonadati</taxon>
        <taxon>Pseudomonadota</taxon>
        <taxon>Betaproteobacteria</taxon>
        <taxon>Burkholderiales</taxon>
        <taxon>Comamonadaceae</taxon>
        <taxon>Delftia</taxon>
    </lineage>
</organism>
<keyword id="KW-0233">DNA recombination</keyword>
<keyword id="KW-0238">DNA-binding</keyword>
<keyword id="KW-1185">Reference proteome</keyword>
<keyword id="KW-0804">Transcription</keyword>
<keyword id="KW-0805">Transcription regulation</keyword>
<keyword id="KW-0810">Translation regulation</keyword>
<dbReference type="EMBL" id="CP000884">
    <property type="protein sequence ID" value="ABX37239.1"/>
    <property type="molecule type" value="Genomic_DNA"/>
</dbReference>
<dbReference type="RefSeq" id="WP_012206409.1">
    <property type="nucleotide sequence ID" value="NC_010002.1"/>
</dbReference>
<dbReference type="SMR" id="A9C3C8"/>
<dbReference type="STRING" id="398578.Daci_4610"/>
<dbReference type="GeneID" id="24115663"/>
<dbReference type="KEGG" id="dac:Daci_4610"/>
<dbReference type="eggNOG" id="COG0776">
    <property type="taxonomic scope" value="Bacteria"/>
</dbReference>
<dbReference type="HOGENOM" id="CLU_105066_1_0_4"/>
<dbReference type="Proteomes" id="UP000000784">
    <property type="component" value="Chromosome"/>
</dbReference>
<dbReference type="GO" id="GO:0005829">
    <property type="term" value="C:cytosol"/>
    <property type="evidence" value="ECO:0007669"/>
    <property type="project" value="TreeGrafter"/>
</dbReference>
<dbReference type="GO" id="GO:0003677">
    <property type="term" value="F:DNA binding"/>
    <property type="evidence" value="ECO:0007669"/>
    <property type="project" value="UniProtKB-UniRule"/>
</dbReference>
<dbReference type="GO" id="GO:0030527">
    <property type="term" value="F:structural constituent of chromatin"/>
    <property type="evidence" value="ECO:0007669"/>
    <property type="project" value="InterPro"/>
</dbReference>
<dbReference type="GO" id="GO:0006310">
    <property type="term" value="P:DNA recombination"/>
    <property type="evidence" value="ECO:0007669"/>
    <property type="project" value="UniProtKB-UniRule"/>
</dbReference>
<dbReference type="GO" id="GO:0009893">
    <property type="term" value="P:positive regulation of metabolic process"/>
    <property type="evidence" value="ECO:0007669"/>
    <property type="project" value="UniProtKB-ARBA"/>
</dbReference>
<dbReference type="GO" id="GO:0006355">
    <property type="term" value="P:regulation of DNA-templated transcription"/>
    <property type="evidence" value="ECO:0007669"/>
    <property type="project" value="UniProtKB-UniRule"/>
</dbReference>
<dbReference type="GO" id="GO:0006417">
    <property type="term" value="P:regulation of translation"/>
    <property type="evidence" value="ECO:0007669"/>
    <property type="project" value="UniProtKB-UniRule"/>
</dbReference>
<dbReference type="CDD" id="cd13835">
    <property type="entry name" value="IHF_A"/>
    <property type="match status" value="1"/>
</dbReference>
<dbReference type="Gene3D" id="4.10.520.10">
    <property type="entry name" value="IHF-like DNA-binding proteins"/>
    <property type="match status" value="1"/>
</dbReference>
<dbReference type="HAMAP" id="MF_00380">
    <property type="entry name" value="IHF_alpha"/>
    <property type="match status" value="1"/>
</dbReference>
<dbReference type="InterPro" id="IPR000119">
    <property type="entry name" value="Hist_DNA-bd"/>
</dbReference>
<dbReference type="InterPro" id="IPR020816">
    <property type="entry name" value="Histone-like_DNA-bd_CS"/>
</dbReference>
<dbReference type="InterPro" id="IPR010992">
    <property type="entry name" value="IHF-like_DNA-bd_dom_sf"/>
</dbReference>
<dbReference type="InterPro" id="IPR005684">
    <property type="entry name" value="IHF_alpha"/>
</dbReference>
<dbReference type="NCBIfam" id="TIGR00987">
    <property type="entry name" value="himA"/>
    <property type="match status" value="1"/>
</dbReference>
<dbReference type="NCBIfam" id="NF001401">
    <property type="entry name" value="PRK00285.1"/>
    <property type="match status" value="1"/>
</dbReference>
<dbReference type="PANTHER" id="PTHR33175">
    <property type="entry name" value="DNA-BINDING PROTEIN HU"/>
    <property type="match status" value="1"/>
</dbReference>
<dbReference type="PANTHER" id="PTHR33175:SF2">
    <property type="entry name" value="INTEGRATION HOST FACTOR SUBUNIT ALPHA"/>
    <property type="match status" value="1"/>
</dbReference>
<dbReference type="Pfam" id="PF00216">
    <property type="entry name" value="Bac_DNA_binding"/>
    <property type="match status" value="1"/>
</dbReference>
<dbReference type="PRINTS" id="PR01727">
    <property type="entry name" value="DNABINDINGHU"/>
</dbReference>
<dbReference type="SMART" id="SM00411">
    <property type="entry name" value="BHL"/>
    <property type="match status" value="1"/>
</dbReference>
<dbReference type="SUPFAM" id="SSF47729">
    <property type="entry name" value="IHF-like DNA-binding proteins"/>
    <property type="match status" value="1"/>
</dbReference>
<dbReference type="PROSITE" id="PS00045">
    <property type="entry name" value="HISTONE_LIKE"/>
    <property type="match status" value="1"/>
</dbReference>
<accession>A9C3C8</accession>
<evidence type="ECO:0000255" key="1">
    <source>
        <dbReference type="HAMAP-Rule" id="MF_00380"/>
    </source>
</evidence>
<protein>
    <recommendedName>
        <fullName evidence="1">Integration host factor subunit alpha</fullName>
        <shortName evidence="1">IHF-alpha</shortName>
    </recommendedName>
</protein>
<name>IHFA_DELAS</name>
<sequence length="110" mass="12050">MELTVESLDSPALTKAQLADLLFDEIGLNKRESKEMVDAFFELISQSLVTGEDVKLSGFGNFQIRTKAPRPGRNPRTGEAIPIEARRVVTFHASSKLKEQIQEGTTGSAS</sequence>
<proteinExistence type="inferred from homology"/>
<reference key="1">
    <citation type="submission" date="2007-11" db="EMBL/GenBank/DDBJ databases">
        <title>Complete sequence of Delftia acidovorans DSM 14801 / SPH-1.</title>
        <authorList>
            <person name="Copeland A."/>
            <person name="Lucas S."/>
            <person name="Lapidus A."/>
            <person name="Barry K."/>
            <person name="Glavina del Rio T."/>
            <person name="Dalin E."/>
            <person name="Tice H."/>
            <person name="Pitluck S."/>
            <person name="Lowry S."/>
            <person name="Clum A."/>
            <person name="Schmutz J."/>
            <person name="Larimer F."/>
            <person name="Land M."/>
            <person name="Hauser L."/>
            <person name="Kyrpides N."/>
            <person name="Kim E."/>
            <person name="Schleheck D."/>
            <person name="Richardson P."/>
        </authorList>
    </citation>
    <scope>NUCLEOTIDE SEQUENCE [LARGE SCALE GENOMIC DNA]</scope>
    <source>
        <strain>DSM 14801 / SPH-1</strain>
    </source>
</reference>
<gene>
    <name evidence="1" type="primary">ihfA</name>
    <name evidence="1" type="synonym">himA</name>
    <name type="ordered locus">Daci_4610</name>
</gene>